<organism>
    <name type="scientific">Saccharolobus islandicus (strain M.14.25 / Kamchatka #1)</name>
    <name type="common">Sulfolobus islandicus</name>
    <dbReference type="NCBI Taxonomy" id="427317"/>
    <lineage>
        <taxon>Archaea</taxon>
        <taxon>Thermoproteota</taxon>
        <taxon>Thermoprotei</taxon>
        <taxon>Sulfolobales</taxon>
        <taxon>Sulfolobaceae</taxon>
        <taxon>Saccharolobus</taxon>
    </lineage>
</organism>
<proteinExistence type="inferred from homology"/>
<accession>C3MYA6</accession>
<name>RS10_SACI4</name>
<dbReference type="EMBL" id="CP001400">
    <property type="protein sequence ID" value="ACP38663.1"/>
    <property type="molecule type" value="Genomic_DNA"/>
</dbReference>
<dbReference type="SMR" id="C3MYA6"/>
<dbReference type="KEGG" id="sia:M1425_1920"/>
<dbReference type="HOGENOM" id="CLU_122625_0_1_2"/>
<dbReference type="Proteomes" id="UP000001350">
    <property type="component" value="Chromosome"/>
</dbReference>
<dbReference type="GO" id="GO:0015935">
    <property type="term" value="C:small ribosomal subunit"/>
    <property type="evidence" value="ECO:0007669"/>
    <property type="project" value="InterPro"/>
</dbReference>
<dbReference type="GO" id="GO:0003735">
    <property type="term" value="F:structural constituent of ribosome"/>
    <property type="evidence" value="ECO:0007669"/>
    <property type="project" value="InterPro"/>
</dbReference>
<dbReference type="GO" id="GO:0000049">
    <property type="term" value="F:tRNA binding"/>
    <property type="evidence" value="ECO:0007669"/>
    <property type="project" value="UniProtKB-UniRule"/>
</dbReference>
<dbReference type="GO" id="GO:0006412">
    <property type="term" value="P:translation"/>
    <property type="evidence" value="ECO:0007669"/>
    <property type="project" value="UniProtKB-UniRule"/>
</dbReference>
<dbReference type="FunFam" id="3.30.70.600:FF:000004">
    <property type="entry name" value="30S ribosomal protein S10"/>
    <property type="match status" value="1"/>
</dbReference>
<dbReference type="Gene3D" id="3.30.70.600">
    <property type="entry name" value="Ribosomal protein S10 domain"/>
    <property type="match status" value="1"/>
</dbReference>
<dbReference type="HAMAP" id="MF_00508">
    <property type="entry name" value="Ribosomal_uS10"/>
    <property type="match status" value="1"/>
</dbReference>
<dbReference type="InterPro" id="IPR001848">
    <property type="entry name" value="Ribosomal_uS10"/>
</dbReference>
<dbReference type="InterPro" id="IPR018268">
    <property type="entry name" value="Ribosomal_uS10_CS"/>
</dbReference>
<dbReference type="InterPro" id="IPR027486">
    <property type="entry name" value="Ribosomal_uS10_dom"/>
</dbReference>
<dbReference type="InterPro" id="IPR036838">
    <property type="entry name" value="Ribosomal_uS10_dom_sf"/>
</dbReference>
<dbReference type="InterPro" id="IPR005729">
    <property type="entry name" value="Ribosomal_uS10_euk/arc"/>
</dbReference>
<dbReference type="NCBIfam" id="TIGR01046">
    <property type="entry name" value="uS10_euk_arch"/>
    <property type="match status" value="1"/>
</dbReference>
<dbReference type="PANTHER" id="PTHR11700">
    <property type="entry name" value="30S RIBOSOMAL PROTEIN S10 FAMILY MEMBER"/>
    <property type="match status" value="1"/>
</dbReference>
<dbReference type="Pfam" id="PF00338">
    <property type="entry name" value="Ribosomal_S10"/>
    <property type="match status" value="1"/>
</dbReference>
<dbReference type="PRINTS" id="PR00971">
    <property type="entry name" value="RIBOSOMALS10"/>
</dbReference>
<dbReference type="SMART" id="SM01403">
    <property type="entry name" value="Ribosomal_S10"/>
    <property type="match status" value="1"/>
</dbReference>
<dbReference type="SUPFAM" id="SSF54999">
    <property type="entry name" value="Ribosomal protein S10"/>
    <property type="match status" value="1"/>
</dbReference>
<dbReference type="PROSITE" id="PS00361">
    <property type="entry name" value="RIBOSOMAL_S10"/>
    <property type="match status" value="1"/>
</dbReference>
<reference key="1">
    <citation type="journal article" date="2009" name="Proc. Natl. Acad. Sci. U.S.A.">
        <title>Biogeography of the Sulfolobus islandicus pan-genome.</title>
        <authorList>
            <person name="Reno M.L."/>
            <person name="Held N.L."/>
            <person name="Fields C.J."/>
            <person name="Burke P.V."/>
            <person name="Whitaker R.J."/>
        </authorList>
    </citation>
    <scope>NUCLEOTIDE SEQUENCE [LARGE SCALE GENOMIC DNA]</scope>
    <source>
        <strain>M.14.25 / Kamchatka #1</strain>
    </source>
</reference>
<gene>
    <name evidence="1" type="primary">rps10</name>
    <name type="ordered locus">M1425_1920</name>
</gene>
<sequence length="102" mass="12112">MPTKARIRLWSTNVENLNYVITQIRGIVEKTGIEMRGPIPLPTSKLEVPIMRLPHGEGRKKWEKWEMRVHKRLIDIAADERVMRQLMRVRVPEDVYIEIQLI</sequence>
<evidence type="ECO:0000255" key="1">
    <source>
        <dbReference type="HAMAP-Rule" id="MF_00508"/>
    </source>
</evidence>
<evidence type="ECO:0000305" key="2"/>
<protein>
    <recommendedName>
        <fullName evidence="1">Small ribosomal subunit protein uS10</fullName>
    </recommendedName>
    <alternativeName>
        <fullName evidence="2">30S ribosomal protein S10</fullName>
    </alternativeName>
</protein>
<comment type="function">
    <text evidence="1">Involved in the binding of tRNA to the ribosomes.</text>
</comment>
<comment type="subunit">
    <text evidence="1">Part of the 30S ribosomal subunit.</text>
</comment>
<comment type="similarity">
    <text evidence="1">Belongs to the universal ribosomal protein uS10 family.</text>
</comment>
<keyword id="KW-0687">Ribonucleoprotein</keyword>
<keyword id="KW-0689">Ribosomal protein</keyword>
<feature type="chain" id="PRO_1000206601" description="Small ribosomal subunit protein uS10">
    <location>
        <begin position="1"/>
        <end position="102"/>
    </location>
</feature>